<organism>
    <name type="scientific">Aliarcobacter butzleri (strain RM4018)</name>
    <name type="common">Arcobacter butzleri</name>
    <dbReference type="NCBI Taxonomy" id="367737"/>
    <lineage>
        <taxon>Bacteria</taxon>
        <taxon>Pseudomonadati</taxon>
        <taxon>Campylobacterota</taxon>
        <taxon>Epsilonproteobacteria</taxon>
        <taxon>Campylobacterales</taxon>
        <taxon>Arcobacteraceae</taxon>
        <taxon>Aliarcobacter</taxon>
    </lineage>
</organism>
<accession>A8ERJ5</accession>
<feature type="chain" id="PRO_1000057168" description="Phosphate acyltransferase">
    <location>
        <begin position="1"/>
        <end position="333"/>
    </location>
</feature>
<gene>
    <name evidence="1" type="primary">plsX</name>
    <name type="ordered locus">Abu_0294</name>
</gene>
<reference key="1">
    <citation type="journal article" date="2007" name="PLoS ONE">
        <title>The complete genome sequence and analysis of the Epsilonproteobacterium Arcobacter butzleri.</title>
        <authorList>
            <person name="Miller W.G."/>
            <person name="Parker C.T."/>
            <person name="Rubenfield M."/>
            <person name="Mendz G.L."/>
            <person name="Woesten M.M.S.M."/>
            <person name="Ussery D.W."/>
            <person name="Stolz J.F."/>
            <person name="Binnewies T.T."/>
            <person name="Hallin P.F."/>
            <person name="Wang G."/>
            <person name="Malek J.A."/>
            <person name="Rogosin A."/>
            <person name="Stanker L.H."/>
            <person name="Mandrell R.E."/>
        </authorList>
    </citation>
    <scope>NUCLEOTIDE SEQUENCE [LARGE SCALE GENOMIC DNA]</scope>
    <source>
        <strain>RM4018</strain>
    </source>
</reference>
<sequence>MLRIAIDAMGGDFGPEPIIEGLVLALRKNNNFTAIAVGNKEQLLPLIPQGLLPRIEILDTNDVISMHDNATDALKRKDSTIYKAIELVREGNADAVVSAGHSGASMSLATLRIGRIKGVSRPAIATLMPTSENQNTLVLDVGANVDSDAKNLFEFAVMGQVYAQYALRLDEPIVGLLSNGEEDSKGNEVTKEAYKLLSKLPGFAGNVEGSDIFKGTVDVVVCDGFIGNILLKTAEGVADTIGKIIKKNLKRSLISIAGAVLMRKVFKNLKVRVDYAEYGGAPLLGVKAPVIISHGKSNSKAIQNAIFQAINAASSNLDSIIEQRLVEYSNKID</sequence>
<evidence type="ECO:0000255" key="1">
    <source>
        <dbReference type="HAMAP-Rule" id="MF_00019"/>
    </source>
</evidence>
<name>PLSX_ALIB4</name>
<proteinExistence type="inferred from homology"/>
<keyword id="KW-0963">Cytoplasm</keyword>
<keyword id="KW-0444">Lipid biosynthesis</keyword>
<keyword id="KW-0443">Lipid metabolism</keyword>
<keyword id="KW-0594">Phospholipid biosynthesis</keyword>
<keyword id="KW-1208">Phospholipid metabolism</keyword>
<keyword id="KW-1185">Reference proteome</keyword>
<keyword id="KW-0808">Transferase</keyword>
<protein>
    <recommendedName>
        <fullName evidence="1">Phosphate acyltransferase</fullName>
        <ecNumber evidence="1">2.3.1.274</ecNumber>
    </recommendedName>
    <alternativeName>
        <fullName evidence="1">Acyl-ACP phosphotransacylase</fullName>
    </alternativeName>
    <alternativeName>
        <fullName evidence="1">Acyl-[acyl-carrier-protein]--phosphate acyltransferase</fullName>
    </alternativeName>
    <alternativeName>
        <fullName evidence="1">Phosphate-acyl-ACP acyltransferase</fullName>
    </alternativeName>
</protein>
<dbReference type="EC" id="2.3.1.274" evidence="1"/>
<dbReference type="EMBL" id="CP000361">
    <property type="protein sequence ID" value="ABV66569.1"/>
    <property type="molecule type" value="Genomic_DNA"/>
</dbReference>
<dbReference type="RefSeq" id="WP_004510350.1">
    <property type="nucleotide sequence ID" value="NC_009850.1"/>
</dbReference>
<dbReference type="SMR" id="A8ERJ5"/>
<dbReference type="STRING" id="367737.Abu_0294"/>
<dbReference type="GeneID" id="24304737"/>
<dbReference type="KEGG" id="abu:Abu_0294"/>
<dbReference type="eggNOG" id="COG0416">
    <property type="taxonomic scope" value="Bacteria"/>
</dbReference>
<dbReference type="HOGENOM" id="CLU_039379_1_1_7"/>
<dbReference type="UniPathway" id="UPA00085"/>
<dbReference type="Proteomes" id="UP000001136">
    <property type="component" value="Chromosome"/>
</dbReference>
<dbReference type="GO" id="GO:0005737">
    <property type="term" value="C:cytoplasm"/>
    <property type="evidence" value="ECO:0007669"/>
    <property type="project" value="UniProtKB-SubCell"/>
</dbReference>
<dbReference type="GO" id="GO:0043811">
    <property type="term" value="F:phosphate:acyl-[acyl carrier protein] acyltransferase activity"/>
    <property type="evidence" value="ECO:0007669"/>
    <property type="project" value="UniProtKB-UniRule"/>
</dbReference>
<dbReference type="GO" id="GO:0006633">
    <property type="term" value="P:fatty acid biosynthetic process"/>
    <property type="evidence" value="ECO:0007669"/>
    <property type="project" value="UniProtKB-UniRule"/>
</dbReference>
<dbReference type="GO" id="GO:0008654">
    <property type="term" value="P:phospholipid biosynthetic process"/>
    <property type="evidence" value="ECO:0007669"/>
    <property type="project" value="UniProtKB-KW"/>
</dbReference>
<dbReference type="Gene3D" id="3.40.718.10">
    <property type="entry name" value="Isopropylmalate Dehydrogenase"/>
    <property type="match status" value="1"/>
</dbReference>
<dbReference type="HAMAP" id="MF_00019">
    <property type="entry name" value="PlsX"/>
    <property type="match status" value="1"/>
</dbReference>
<dbReference type="InterPro" id="IPR003664">
    <property type="entry name" value="FA_synthesis"/>
</dbReference>
<dbReference type="InterPro" id="IPR012281">
    <property type="entry name" value="Phospholipid_synth_PlsX-like"/>
</dbReference>
<dbReference type="NCBIfam" id="TIGR00182">
    <property type="entry name" value="plsX"/>
    <property type="match status" value="1"/>
</dbReference>
<dbReference type="PANTHER" id="PTHR30100">
    <property type="entry name" value="FATTY ACID/PHOSPHOLIPID SYNTHESIS PROTEIN PLSX"/>
    <property type="match status" value="1"/>
</dbReference>
<dbReference type="PANTHER" id="PTHR30100:SF1">
    <property type="entry name" value="PHOSPHATE ACYLTRANSFERASE"/>
    <property type="match status" value="1"/>
</dbReference>
<dbReference type="Pfam" id="PF02504">
    <property type="entry name" value="FA_synthesis"/>
    <property type="match status" value="1"/>
</dbReference>
<dbReference type="PIRSF" id="PIRSF002465">
    <property type="entry name" value="Phsphlp_syn_PlsX"/>
    <property type="match status" value="1"/>
</dbReference>
<dbReference type="SUPFAM" id="SSF53659">
    <property type="entry name" value="Isocitrate/Isopropylmalate dehydrogenase-like"/>
    <property type="match status" value="1"/>
</dbReference>
<comment type="function">
    <text evidence="1">Catalyzes the reversible formation of acyl-phosphate (acyl-PO(4)) from acyl-[acyl-carrier-protein] (acyl-ACP). This enzyme utilizes acyl-ACP as fatty acyl donor, but not acyl-CoA.</text>
</comment>
<comment type="catalytic activity">
    <reaction evidence="1">
        <text>a fatty acyl-[ACP] + phosphate = an acyl phosphate + holo-[ACP]</text>
        <dbReference type="Rhea" id="RHEA:42292"/>
        <dbReference type="Rhea" id="RHEA-COMP:9685"/>
        <dbReference type="Rhea" id="RHEA-COMP:14125"/>
        <dbReference type="ChEBI" id="CHEBI:43474"/>
        <dbReference type="ChEBI" id="CHEBI:59918"/>
        <dbReference type="ChEBI" id="CHEBI:64479"/>
        <dbReference type="ChEBI" id="CHEBI:138651"/>
        <dbReference type="EC" id="2.3.1.274"/>
    </reaction>
</comment>
<comment type="pathway">
    <text evidence="1">Lipid metabolism; phospholipid metabolism.</text>
</comment>
<comment type="subunit">
    <text evidence="1">Homodimer. Probably interacts with PlsY.</text>
</comment>
<comment type="subcellular location">
    <subcellularLocation>
        <location evidence="1">Cytoplasm</location>
    </subcellularLocation>
    <text evidence="1">Associated with the membrane possibly through PlsY.</text>
</comment>
<comment type="similarity">
    <text evidence="1">Belongs to the PlsX family.</text>
</comment>